<proteinExistence type="inferred from homology"/>
<keyword id="KW-0175">Coiled coil</keyword>
<keyword id="KW-0403">Intermediate filament</keyword>
<keyword id="KW-0416">Keratin</keyword>
<keyword id="KW-1185">Reference proteome</keyword>
<comment type="function">
    <text evidence="1">May play a role in late hair differentiation.</text>
</comment>
<comment type="subunit">
    <text>Heterotetramer of two type I and two type II keratins.</text>
</comment>
<comment type="miscellaneous">
    <text>There are two types of cytoskeletal and microfibrillar keratin, I (acidic) and II (neutral to basic) (40-55 and 56-70 kDa, respectively).</text>
</comment>
<comment type="similarity">
    <text evidence="2">Belongs to the intermediate filament family.</text>
</comment>
<gene>
    <name type="primary">Krt39</name>
    <name type="synonym">Ka35</name>
</gene>
<dbReference type="EMBL" id="AABR03073663">
    <property type="status" value="NOT_ANNOTATED_CDS"/>
    <property type="molecule type" value="Genomic_DNA"/>
</dbReference>
<dbReference type="EMBL" id="BK004035">
    <property type="protein sequence ID" value="DAA04469.1"/>
    <property type="molecule type" value="mRNA"/>
</dbReference>
<dbReference type="RefSeq" id="NP_001004130.1">
    <property type="nucleotide sequence ID" value="NM_001004130.1"/>
</dbReference>
<dbReference type="SMR" id="Q6IFW3"/>
<dbReference type="FunCoup" id="Q6IFW3">
    <property type="interactions" value="131"/>
</dbReference>
<dbReference type="STRING" id="10116.ENSRNOP00000039322"/>
<dbReference type="PhosphoSitePlus" id="Q6IFW3"/>
<dbReference type="PaxDb" id="10116-ENSRNOP00000039322"/>
<dbReference type="GeneID" id="303523"/>
<dbReference type="KEGG" id="rno:303523"/>
<dbReference type="UCSC" id="RGD:1303032">
    <property type="organism name" value="rat"/>
</dbReference>
<dbReference type="AGR" id="RGD:1303032"/>
<dbReference type="CTD" id="390792"/>
<dbReference type="RGD" id="1303032">
    <property type="gene designation" value="Krt39"/>
</dbReference>
<dbReference type="eggNOG" id="ENOG502SH7Y">
    <property type="taxonomic scope" value="Eukaryota"/>
</dbReference>
<dbReference type="InParanoid" id="Q6IFW3"/>
<dbReference type="OrthoDB" id="59066at9989"/>
<dbReference type="PhylomeDB" id="Q6IFW3"/>
<dbReference type="Reactome" id="R-RNO-6805567">
    <property type="pathway name" value="Keratinization"/>
</dbReference>
<dbReference type="Reactome" id="R-RNO-6809371">
    <property type="pathway name" value="Formation of the cornified envelope"/>
</dbReference>
<dbReference type="PRO" id="PR:Q6IFW3"/>
<dbReference type="Proteomes" id="UP000002494">
    <property type="component" value="Unplaced"/>
</dbReference>
<dbReference type="GO" id="GO:0005856">
    <property type="term" value="C:cytoskeleton"/>
    <property type="evidence" value="ECO:0000318"/>
    <property type="project" value="GO_Central"/>
</dbReference>
<dbReference type="GO" id="GO:0005882">
    <property type="term" value="C:intermediate filament"/>
    <property type="evidence" value="ECO:0000304"/>
    <property type="project" value="RGD"/>
</dbReference>
<dbReference type="GO" id="GO:0045095">
    <property type="term" value="C:keratin filament"/>
    <property type="evidence" value="ECO:0000304"/>
    <property type="project" value="RGD"/>
</dbReference>
<dbReference type="GO" id="GO:0005200">
    <property type="term" value="F:structural constituent of cytoskeleton"/>
    <property type="evidence" value="ECO:0000304"/>
    <property type="project" value="RGD"/>
</dbReference>
<dbReference type="GO" id="GO:0030855">
    <property type="term" value="P:epithelial cell differentiation"/>
    <property type="evidence" value="ECO:0000318"/>
    <property type="project" value="GO_Central"/>
</dbReference>
<dbReference type="GO" id="GO:0045109">
    <property type="term" value="P:intermediate filament organization"/>
    <property type="evidence" value="ECO:0000318"/>
    <property type="project" value="GO_Central"/>
</dbReference>
<dbReference type="GO" id="GO:0045103">
    <property type="term" value="P:intermediate filament-based process"/>
    <property type="evidence" value="ECO:0000304"/>
    <property type="project" value="RGD"/>
</dbReference>
<dbReference type="FunFam" id="1.20.5.1160:FF:000002">
    <property type="entry name" value="Type I keratin 10"/>
    <property type="match status" value="1"/>
</dbReference>
<dbReference type="FunFam" id="1.20.5.170:FF:000002">
    <property type="entry name" value="Type I keratin KA11"/>
    <property type="match status" value="1"/>
</dbReference>
<dbReference type="FunFam" id="1.20.5.500:FF:000001">
    <property type="entry name" value="Type II keratin 23"/>
    <property type="match status" value="1"/>
</dbReference>
<dbReference type="Gene3D" id="1.20.5.170">
    <property type="match status" value="1"/>
</dbReference>
<dbReference type="Gene3D" id="1.20.5.500">
    <property type="entry name" value="Single helix bin"/>
    <property type="match status" value="1"/>
</dbReference>
<dbReference type="Gene3D" id="1.20.5.1160">
    <property type="entry name" value="Vasodilator-stimulated phosphoprotein"/>
    <property type="match status" value="1"/>
</dbReference>
<dbReference type="InterPro" id="IPR018039">
    <property type="entry name" value="IF_conserved"/>
</dbReference>
<dbReference type="InterPro" id="IPR039008">
    <property type="entry name" value="IF_rod_dom"/>
</dbReference>
<dbReference type="InterPro" id="IPR002957">
    <property type="entry name" value="Keratin_I"/>
</dbReference>
<dbReference type="PANTHER" id="PTHR23239">
    <property type="entry name" value="INTERMEDIATE FILAMENT"/>
    <property type="match status" value="1"/>
</dbReference>
<dbReference type="PANTHER" id="PTHR23239:SF106">
    <property type="entry name" value="KERATIN, TYPE I CYTOSKELETAL 39"/>
    <property type="match status" value="1"/>
</dbReference>
<dbReference type="Pfam" id="PF00038">
    <property type="entry name" value="Filament"/>
    <property type="match status" value="1"/>
</dbReference>
<dbReference type="PRINTS" id="PR01248">
    <property type="entry name" value="TYPE1KERATIN"/>
</dbReference>
<dbReference type="SMART" id="SM01391">
    <property type="entry name" value="Filament"/>
    <property type="match status" value="1"/>
</dbReference>
<dbReference type="SUPFAM" id="SSF64593">
    <property type="entry name" value="Intermediate filament protein, coiled coil region"/>
    <property type="match status" value="2"/>
</dbReference>
<dbReference type="PROSITE" id="PS00226">
    <property type="entry name" value="IF_ROD_1"/>
    <property type="match status" value="1"/>
</dbReference>
<dbReference type="PROSITE" id="PS51842">
    <property type="entry name" value="IF_ROD_2"/>
    <property type="match status" value="1"/>
</dbReference>
<reference key="1">
    <citation type="journal article" date="2004" name="Nature">
        <title>Genome sequence of the Brown Norway rat yields insights into mammalian evolution.</title>
        <authorList>
            <person name="Gibbs R.A."/>
            <person name="Weinstock G.M."/>
            <person name="Metzker M.L."/>
            <person name="Muzny D.M."/>
            <person name="Sodergren E.J."/>
            <person name="Scherer S."/>
            <person name="Scott G."/>
            <person name="Steffen D."/>
            <person name="Worley K.C."/>
            <person name="Burch P.E."/>
            <person name="Okwuonu G."/>
            <person name="Hines S."/>
            <person name="Lewis L."/>
            <person name="Deramo C."/>
            <person name="Delgado O."/>
            <person name="Dugan-Rocha S."/>
            <person name="Miner G."/>
            <person name="Morgan M."/>
            <person name="Hawes A."/>
            <person name="Gill R."/>
            <person name="Holt R.A."/>
            <person name="Adams M.D."/>
            <person name="Amanatides P.G."/>
            <person name="Baden-Tillson H."/>
            <person name="Barnstead M."/>
            <person name="Chin S."/>
            <person name="Evans C.A."/>
            <person name="Ferriera S."/>
            <person name="Fosler C."/>
            <person name="Glodek A."/>
            <person name="Gu Z."/>
            <person name="Jennings D."/>
            <person name="Kraft C.L."/>
            <person name="Nguyen T."/>
            <person name="Pfannkoch C.M."/>
            <person name="Sitter C."/>
            <person name="Sutton G.G."/>
            <person name="Venter J.C."/>
            <person name="Woodage T."/>
            <person name="Smith D."/>
            <person name="Lee H.-M."/>
            <person name="Gustafson E."/>
            <person name="Cahill P."/>
            <person name="Kana A."/>
            <person name="Doucette-Stamm L."/>
            <person name="Weinstock K."/>
            <person name="Fechtel K."/>
            <person name="Weiss R.B."/>
            <person name="Dunn D.M."/>
            <person name="Green E.D."/>
            <person name="Blakesley R.W."/>
            <person name="Bouffard G.G."/>
            <person name="De Jong P.J."/>
            <person name="Osoegawa K."/>
            <person name="Zhu B."/>
            <person name="Marra M."/>
            <person name="Schein J."/>
            <person name="Bosdet I."/>
            <person name="Fjell C."/>
            <person name="Jones S."/>
            <person name="Krzywinski M."/>
            <person name="Mathewson C."/>
            <person name="Siddiqui A."/>
            <person name="Wye N."/>
            <person name="McPherson J."/>
            <person name="Zhao S."/>
            <person name="Fraser C.M."/>
            <person name="Shetty J."/>
            <person name="Shatsman S."/>
            <person name="Geer K."/>
            <person name="Chen Y."/>
            <person name="Abramzon S."/>
            <person name="Nierman W.C."/>
            <person name="Havlak P.H."/>
            <person name="Chen R."/>
            <person name="Durbin K.J."/>
            <person name="Egan A."/>
            <person name="Ren Y."/>
            <person name="Song X.-Z."/>
            <person name="Li B."/>
            <person name="Liu Y."/>
            <person name="Qin X."/>
            <person name="Cawley S."/>
            <person name="Cooney A.J."/>
            <person name="D'Souza L.M."/>
            <person name="Martin K."/>
            <person name="Wu J.Q."/>
            <person name="Gonzalez-Garay M.L."/>
            <person name="Jackson A.R."/>
            <person name="Kalafus K.J."/>
            <person name="McLeod M.P."/>
            <person name="Milosavljevic A."/>
            <person name="Virk D."/>
            <person name="Volkov A."/>
            <person name="Wheeler D.A."/>
            <person name="Zhang Z."/>
            <person name="Bailey J.A."/>
            <person name="Eichler E.E."/>
            <person name="Tuzun E."/>
            <person name="Birney E."/>
            <person name="Mongin E."/>
            <person name="Ureta-Vidal A."/>
            <person name="Woodwark C."/>
            <person name="Zdobnov E."/>
            <person name="Bork P."/>
            <person name="Suyama M."/>
            <person name="Torrents D."/>
            <person name="Alexandersson M."/>
            <person name="Trask B.J."/>
            <person name="Young J.M."/>
            <person name="Huang H."/>
            <person name="Wang H."/>
            <person name="Xing H."/>
            <person name="Daniels S."/>
            <person name="Gietzen D."/>
            <person name="Schmidt J."/>
            <person name="Stevens K."/>
            <person name="Vitt U."/>
            <person name="Wingrove J."/>
            <person name="Camara F."/>
            <person name="Mar Alba M."/>
            <person name="Abril J.F."/>
            <person name="Guigo R."/>
            <person name="Smit A."/>
            <person name="Dubchak I."/>
            <person name="Rubin E.M."/>
            <person name="Couronne O."/>
            <person name="Poliakov A."/>
            <person name="Huebner N."/>
            <person name="Ganten D."/>
            <person name="Goesele C."/>
            <person name="Hummel O."/>
            <person name="Kreitler T."/>
            <person name="Lee Y.-A."/>
            <person name="Monti J."/>
            <person name="Schulz H."/>
            <person name="Zimdahl H."/>
            <person name="Himmelbauer H."/>
            <person name="Lehrach H."/>
            <person name="Jacob H.J."/>
            <person name="Bromberg S."/>
            <person name="Gullings-Handley J."/>
            <person name="Jensen-Seaman M.I."/>
            <person name="Kwitek A.E."/>
            <person name="Lazar J."/>
            <person name="Pasko D."/>
            <person name="Tonellato P.J."/>
            <person name="Twigger S."/>
            <person name="Ponting C.P."/>
            <person name="Duarte J.M."/>
            <person name="Rice S."/>
            <person name="Goodstadt L."/>
            <person name="Beatson S.A."/>
            <person name="Emes R.D."/>
            <person name="Winter E.E."/>
            <person name="Webber C."/>
            <person name="Brandt P."/>
            <person name="Nyakatura G."/>
            <person name="Adetobi M."/>
            <person name="Chiaromonte F."/>
            <person name="Elnitski L."/>
            <person name="Eswara P."/>
            <person name="Hardison R.C."/>
            <person name="Hou M."/>
            <person name="Kolbe D."/>
            <person name="Makova K."/>
            <person name="Miller W."/>
            <person name="Nekrutenko A."/>
            <person name="Riemer C."/>
            <person name="Schwartz S."/>
            <person name="Taylor J."/>
            <person name="Yang S."/>
            <person name="Zhang Y."/>
            <person name="Lindpaintner K."/>
            <person name="Andrews T.D."/>
            <person name="Caccamo M."/>
            <person name="Clamp M."/>
            <person name="Clarke L."/>
            <person name="Curwen V."/>
            <person name="Durbin R.M."/>
            <person name="Eyras E."/>
            <person name="Searle S.M."/>
            <person name="Cooper G.M."/>
            <person name="Batzoglou S."/>
            <person name="Brudno M."/>
            <person name="Sidow A."/>
            <person name="Stone E.A."/>
            <person name="Payseur B.A."/>
            <person name="Bourque G."/>
            <person name="Lopez-Otin C."/>
            <person name="Puente X.S."/>
            <person name="Chakrabarti K."/>
            <person name="Chatterji S."/>
            <person name="Dewey C."/>
            <person name="Pachter L."/>
            <person name="Bray N."/>
            <person name="Yap V.B."/>
            <person name="Caspi A."/>
            <person name="Tesler G."/>
            <person name="Pevzner P.A."/>
            <person name="Haussler D."/>
            <person name="Roskin K.M."/>
            <person name="Baertsch R."/>
            <person name="Clawson H."/>
            <person name="Furey T.S."/>
            <person name="Hinrichs A.S."/>
            <person name="Karolchik D."/>
            <person name="Kent W.J."/>
            <person name="Rosenbloom K.R."/>
            <person name="Trumbower H."/>
            <person name="Weirauch M."/>
            <person name="Cooper D.N."/>
            <person name="Stenson P.D."/>
            <person name="Ma B."/>
            <person name="Brent M."/>
            <person name="Arumugam M."/>
            <person name="Shteynberg D."/>
            <person name="Copley R.R."/>
            <person name="Taylor M.S."/>
            <person name="Riethman H."/>
            <person name="Mudunuri U."/>
            <person name="Peterson J."/>
            <person name="Guyer M."/>
            <person name="Felsenfeld A."/>
            <person name="Old S."/>
            <person name="Mockrin S."/>
            <person name="Collins F.S."/>
        </authorList>
    </citation>
    <scope>NUCLEOTIDE SEQUENCE [LARGE SCALE GENOMIC DNA]</scope>
    <source>
        <strain>Brown Norway</strain>
    </source>
</reference>
<reference key="2">
    <citation type="journal article" date="2004" name="Eur. J. Cell Biol.">
        <title>Comprehensive analysis of keratin gene clusters in humans and rodents.</title>
        <authorList>
            <person name="Hesse M."/>
            <person name="Zimek A."/>
            <person name="Weber K."/>
            <person name="Magin T.M."/>
        </authorList>
    </citation>
    <scope>IDENTIFICATION</scope>
</reference>
<organism>
    <name type="scientific">Rattus norvegicus</name>
    <name type="common">Rat</name>
    <dbReference type="NCBI Taxonomy" id="10116"/>
    <lineage>
        <taxon>Eukaryota</taxon>
        <taxon>Metazoa</taxon>
        <taxon>Chordata</taxon>
        <taxon>Craniata</taxon>
        <taxon>Vertebrata</taxon>
        <taxon>Euteleostomi</taxon>
        <taxon>Mammalia</taxon>
        <taxon>Eutheria</taxon>
        <taxon>Euarchontoglires</taxon>
        <taxon>Glires</taxon>
        <taxon>Rodentia</taxon>
        <taxon>Myomorpha</taxon>
        <taxon>Muroidea</taxon>
        <taxon>Muridae</taxon>
        <taxon>Murinae</taxon>
        <taxon>Rattus</taxon>
    </lineage>
</organism>
<accession>Q6IFW3</accession>
<protein>
    <recommendedName>
        <fullName>Keratin, type I cytoskeletal 39</fullName>
    </recommendedName>
    <alternativeName>
        <fullName>Cytokeratin-39</fullName>
        <shortName>CK-39</shortName>
    </alternativeName>
    <alternativeName>
        <fullName>Keratin-39</fullName>
        <shortName>K39</shortName>
    </alternativeName>
    <alternativeName>
        <fullName>Type I hair keratin Ka35</fullName>
    </alternativeName>
</protein>
<feature type="chain" id="PRO_0000314855" description="Keratin, type I cytoskeletal 39">
    <location>
        <begin position="1"/>
        <end position="481"/>
    </location>
</feature>
<feature type="domain" description="IF rod" evidence="2">
    <location>
        <begin position="90"/>
        <end position="401"/>
    </location>
</feature>
<feature type="region of interest" description="Head">
    <location>
        <begin position="1"/>
        <end position="90"/>
    </location>
</feature>
<feature type="region of interest" description="Disordered" evidence="3">
    <location>
        <begin position="1"/>
        <end position="25"/>
    </location>
</feature>
<feature type="region of interest" description="Coil 1A">
    <location>
        <begin position="91"/>
        <end position="125"/>
    </location>
</feature>
<feature type="region of interest" description="Linker 1">
    <location>
        <begin position="126"/>
        <end position="136"/>
    </location>
</feature>
<feature type="region of interest" description="Coil 1B">
    <location>
        <begin position="137"/>
        <end position="237"/>
    </location>
</feature>
<feature type="region of interest" description="Linker 12">
    <location>
        <begin position="238"/>
        <end position="253"/>
    </location>
</feature>
<feature type="region of interest" description="Coil 2">
    <location>
        <begin position="254"/>
        <end position="397"/>
    </location>
</feature>
<feature type="region of interest" description="Tail">
    <location>
        <begin position="398"/>
        <end position="481"/>
    </location>
</feature>
<feature type="site" description="Stutter">
    <location>
        <position position="339"/>
    </location>
</feature>
<sequence length="481" mass="54338">MDTKGSTVTISSSTPPQNCSGNTNVRTNSSNKSCYHDVQSTGHALQTPQGQGCRPSPCLYRCPNYLIRTYSFHPCPDDCSRCSDGINSHEKETMQILNERLASYLEKVRMLEGENADLEDKIQEECSKTLPILCPDYLSYYTTIEQLQQKILCTKAENSRLVSQIDNTKLAADDLRAKYEAELSLRQLVEADANGLKQILDALTLSKADLEARVQSLTEELLCLKTNHEEEINSLQCQLGDRINIEVTAAPSVDLNQILQKMRCQYESIVETNRKDVEEWFNTQMEELNQQVVSSSQQQQCCQKDIIELRRTISALEVELQAQHRMRDSQECILAETEARYTALLAQIQSLIHNLEAQVAEIRSALQRQNQEYEVLLDIKSRLECEIATYRSLLESLDGRLPCNPCTTTWEPSCQARAMECLTPVYTSISLPGIHKPCRASGPPSRILVKICTITKEIKDGKVISSHEHVQPCYITRPAKV</sequence>
<evidence type="ECO:0000250" key="1"/>
<evidence type="ECO:0000255" key="2">
    <source>
        <dbReference type="PROSITE-ProRule" id="PRU01188"/>
    </source>
</evidence>
<evidence type="ECO:0000256" key="3">
    <source>
        <dbReference type="SAM" id="MobiDB-lite"/>
    </source>
</evidence>
<name>K1C39_RAT</name>